<gene>
    <name type="primary">Pklr</name>
</gene>
<comment type="function">
    <text evidence="3">Pyruvate kinase that catalyzes the conversion of phosphoenolpyruvate to pyruvate with the synthesis of ATP, and which plays a key role in glycolysis.</text>
</comment>
<comment type="catalytic activity">
    <reaction evidence="3">
        <text>pyruvate + ATP = phosphoenolpyruvate + ADP + H(+)</text>
        <dbReference type="Rhea" id="RHEA:18157"/>
        <dbReference type="ChEBI" id="CHEBI:15361"/>
        <dbReference type="ChEBI" id="CHEBI:15378"/>
        <dbReference type="ChEBI" id="CHEBI:30616"/>
        <dbReference type="ChEBI" id="CHEBI:58702"/>
        <dbReference type="ChEBI" id="CHEBI:456216"/>
        <dbReference type="EC" id="2.7.1.40"/>
    </reaction>
    <physiologicalReaction direction="right-to-left" evidence="3">
        <dbReference type="Rhea" id="RHEA:18159"/>
    </physiologicalReaction>
</comment>
<comment type="cofactor">
    <cofactor evidence="3">
        <name>Mg(2+)</name>
        <dbReference type="ChEBI" id="CHEBI:18420"/>
    </cofactor>
    <cofactor evidence="3">
        <name>Mn(2+)</name>
        <dbReference type="ChEBI" id="CHEBI:29035"/>
    </cofactor>
</comment>
<comment type="cofactor">
    <cofactor evidence="3">
        <name>K(+)</name>
        <dbReference type="ChEBI" id="CHEBI:29103"/>
    </cofactor>
</comment>
<comment type="activity regulation">
    <text evidence="3">Allosterically activated by fructose 1,6-bisphosphate.</text>
</comment>
<comment type="pathway">
    <text evidence="3">Carbohydrate degradation; glycolysis; pyruvate from D-glyceraldehyde 3-phosphate: step 5/5.</text>
</comment>
<comment type="subunit">
    <text evidence="3">Homotetramer.</text>
</comment>
<comment type="alternative products">
    <event type="alternative splicing"/>
    <isoform>
        <id>P12928-1</id>
        <name>R-type</name>
        <name>PKR</name>
        <sequence type="displayed"/>
    </isoform>
    <isoform>
        <id>P12928-2</id>
        <name>L-type</name>
        <name>PKL</name>
        <sequence type="described" ref="VSP_002884"/>
    </isoform>
</comment>
<comment type="miscellaneous">
    <text evidence="4">There are 4 isozymes of pyruvate kinase in mammals: L, R, M1 and M2. L type is major isozyme in the liver, R is found in red cells, M1 is the main form in muscle, heart and brain, and M2 is found in early fetal tissues.</text>
</comment>
<comment type="similarity">
    <text evidence="4">Belongs to the pyruvate kinase family.</text>
</comment>
<reference key="1">
    <citation type="journal article" date="1987" name="J. Biol. Chem.">
        <title>The L- and R-type isozymes of rat pyruvate kinase are produced from a single gene by use of different promoters.</title>
        <authorList>
            <person name="Noguchi T."/>
            <person name="Yamada K."/>
            <person name="Inoue H."/>
            <person name="Matsuda T."/>
            <person name="Tanaka T."/>
        </authorList>
    </citation>
    <scope>NUCLEOTIDE SEQUENCE [GENOMIC DNA]</scope>
</reference>
<reference key="2">
    <citation type="journal article" date="1986" name="Eur. J. Biochem.">
        <title>Complete amino acid sequence of rat L-type pyruvate kinase deduced from the cDNA sequence.</title>
        <authorList>
            <person name="Inoue H."/>
            <person name="Noguchi T."/>
            <person name="Tanaka T."/>
        </authorList>
    </citation>
    <scope>NUCLEOTIDE SEQUENCE [MRNA]</scope>
</reference>
<reference key="3">
    <citation type="journal article" date="1986" name="FEBS Lett.">
        <title>Complete nucleotide and deduced amino acid sequences of rat L-type pyruvate kinase.</title>
        <authorList>
            <person name="Lone Y.-C."/>
            <person name="Simon M.-P."/>
            <person name="Kahn A."/>
            <person name="Marie J."/>
        </authorList>
    </citation>
    <scope>NUCLEOTIDE SEQUENCE [MRNA]</scope>
</reference>
<reference key="4">
    <citation type="journal article" date="1987" name="J. Mol. Biol.">
        <title>Structure of the rat L-type pyruvate kinase gene.</title>
        <authorList>
            <person name="Cognet M."/>
            <person name="Lone Y.C."/>
            <person name="Vaulont S."/>
            <person name="Kahn A."/>
            <person name="Marie J."/>
        </authorList>
    </citation>
    <scope>NUCLEOTIDE SEQUENCE [GENOMIC DNA]</scope>
</reference>
<reference key="5">
    <citation type="journal article" date="2012" name="Nat. Commun.">
        <title>Quantitative maps of protein phosphorylation sites across 14 different rat organs and tissues.</title>
        <authorList>
            <person name="Lundby A."/>
            <person name="Secher A."/>
            <person name="Lage K."/>
            <person name="Nordsborg N.B."/>
            <person name="Dmytriyev A."/>
            <person name="Lundby C."/>
            <person name="Olsen J.V."/>
        </authorList>
    </citation>
    <scope>IDENTIFICATION BY MASS SPECTROMETRY [LARGE SCALE ANALYSIS]</scope>
</reference>
<accession>P12928</accession>
<accession>P04763</accession>
<accession>Q64618</accession>
<evidence type="ECO:0000250" key="1">
    <source>
        <dbReference type="UniProtKB" id="P00549"/>
    </source>
</evidence>
<evidence type="ECO:0000250" key="2">
    <source>
        <dbReference type="UniProtKB" id="P14618"/>
    </source>
</evidence>
<evidence type="ECO:0000250" key="3">
    <source>
        <dbReference type="UniProtKB" id="P30613"/>
    </source>
</evidence>
<evidence type="ECO:0000305" key="4"/>
<evidence type="ECO:0007829" key="5">
    <source>
        <dbReference type="PDB" id="6ECH"/>
    </source>
</evidence>
<evidence type="ECO:0007829" key="6">
    <source>
        <dbReference type="PDB" id="6ECK"/>
    </source>
</evidence>
<dbReference type="EC" id="2.7.1.40" evidence="3"/>
<dbReference type="EMBL" id="M17091">
    <property type="protein sequence ID" value="AAA41882.1"/>
    <property type="molecule type" value="Genomic_DNA"/>
</dbReference>
<dbReference type="EMBL" id="M17088">
    <property type="protein sequence ID" value="AAA41882.1"/>
    <property type="status" value="JOINED"/>
    <property type="molecule type" value="Genomic_DNA"/>
</dbReference>
<dbReference type="EMBL" id="M17089">
    <property type="protein sequence ID" value="AAA41882.1"/>
    <property type="status" value="JOINED"/>
    <property type="molecule type" value="Genomic_DNA"/>
</dbReference>
<dbReference type="EMBL" id="M17090">
    <property type="protein sequence ID" value="AAA41882.1"/>
    <property type="status" value="JOINED"/>
    <property type="molecule type" value="Genomic_DNA"/>
</dbReference>
<dbReference type="EMBL" id="M17091">
    <property type="protein sequence ID" value="AAA41883.1"/>
    <property type="molecule type" value="Genomic_DNA"/>
</dbReference>
<dbReference type="EMBL" id="M17088">
    <property type="protein sequence ID" value="AAA41883.1"/>
    <property type="status" value="JOINED"/>
    <property type="molecule type" value="Genomic_DNA"/>
</dbReference>
<dbReference type="EMBL" id="M17089">
    <property type="protein sequence ID" value="AAA41883.1"/>
    <property type="status" value="JOINED"/>
    <property type="molecule type" value="Genomic_DNA"/>
</dbReference>
<dbReference type="EMBL" id="M17090">
    <property type="protein sequence ID" value="AAA41883.1"/>
    <property type="status" value="JOINED"/>
    <property type="molecule type" value="Genomic_DNA"/>
</dbReference>
<dbReference type="EMBL" id="M17685">
    <property type="protein sequence ID" value="AAA41881.1"/>
    <property type="molecule type" value="mRNA"/>
</dbReference>
<dbReference type="EMBL" id="X05684">
    <property type="protein sequence ID" value="CAA29169.1"/>
    <property type="molecule type" value="Genomic_DNA"/>
</dbReference>
<dbReference type="EMBL" id="M11709">
    <property type="protein sequence ID" value="AAA41880.1"/>
    <property type="molecule type" value="mRNA"/>
</dbReference>
<dbReference type="PIR" id="A27427">
    <property type="entry name" value="KIRTPR"/>
</dbReference>
<dbReference type="PIR" id="A92940">
    <property type="entry name" value="KIRTPL"/>
</dbReference>
<dbReference type="RefSeq" id="NP_036756.3">
    <molecule id="P12928-2"/>
    <property type="nucleotide sequence ID" value="NM_012624.3"/>
</dbReference>
<dbReference type="RefSeq" id="XP_006232655.1">
    <molecule id="P12928-1"/>
    <property type="nucleotide sequence ID" value="XM_006232593.5"/>
</dbReference>
<dbReference type="PDB" id="6ECH">
    <property type="method" value="X-ray"/>
    <property type="resolution" value="2.19 A"/>
    <property type="chains" value="A/B/C/D=34-574"/>
</dbReference>
<dbReference type="PDB" id="6ECK">
    <property type="method" value="X-ray"/>
    <property type="resolution" value="2.36 A"/>
    <property type="chains" value="A/B=34-574"/>
</dbReference>
<dbReference type="PDBsum" id="6ECH"/>
<dbReference type="PDBsum" id="6ECK"/>
<dbReference type="SMR" id="P12928"/>
<dbReference type="BioGRID" id="246786">
    <property type="interactions" value="1"/>
</dbReference>
<dbReference type="FunCoup" id="P12928">
    <property type="interactions" value="317"/>
</dbReference>
<dbReference type="IntAct" id="P12928">
    <property type="interactions" value="1"/>
</dbReference>
<dbReference type="MINT" id="P12928"/>
<dbReference type="STRING" id="10116.ENSRNOP00000027700"/>
<dbReference type="BindingDB" id="P12928"/>
<dbReference type="ChEMBL" id="CHEMBL3089"/>
<dbReference type="GlyGen" id="P12928">
    <property type="glycosylation" value="1 site"/>
</dbReference>
<dbReference type="iPTMnet" id="P12928"/>
<dbReference type="PhosphoSitePlus" id="P12928"/>
<dbReference type="jPOST" id="P12928"/>
<dbReference type="PaxDb" id="10116-ENSRNOP00000027700"/>
<dbReference type="Ensembl" id="ENSRNOT00000027700.7">
    <molecule id="P12928-1"/>
    <property type="protein sequence ID" value="ENSRNOP00000027700.3"/>
    <property type="gene ID" value="ENSRNOG00000020420.7"/>
</dbReference>
<dbReference type="Ensembl" id="ENSRNOT00000103387.1">
    <molecule id="P12928-2"/>
    <property type="protein sequence ID" value="ENSRNOP00000093132.1"/>
    <property type="gene ID" value="ENSRNOG00000020420.7"/>
</dbReference>
<dbReference type="GeneID" id="24651"/>
<dbReference type="KEGG" id="rno:24651"/>
<dbReference type="UCSC" id="RGD:3336">
    <molecule id="P12928-1"/>
    <property type="organism name" value="rat"/>
</dbReference>
<dbReference type="AGR" id="RGD:3336"/>
<dbReference type="CTD" id="5313"/>
<dbReference type="RGD" id="3336">
    <property type="gene designation" value="Pklr"/>
</dbReference>
<dbReference type="eggNOG" id="KOG2323">
    <property type="taxonomic scope" value="Eukaryota"/>
</dbReference>
<dbReference type="GeneTree" id="ENSGT00390000008859"/>
<dbReference type="HOGENOM" id="CLU_015439_0_1_1"/>
<dbReference type="InParanoid" id="P12928"/>
<dbReference type="OMA" id="HQGRYDR"/>
<dbReference type="OrthoDB" id="44365at9989"/>
<dbReference type="PhylomeDB" id="P12928"/>
<dbReference type="TreeFam" id="TF300390"/>
<dbReference type="Reactome" id="R-RNO-70171">
    <property type="pathway name" value="Glycolysis"/>
</dbReference>
<dbReference type="Reactome" id="R-RNO-70268">
    <property type="pathway name" value="Pyruvate metabolism"/>
</dbReference>
<dbReference type="SABIO-RK" id="P12928"/>
<dbReference type="UniPathway" id="UPA00109">
    <property type="reaction ID" value="UER00188"/>
</dbReference>
<dbReference type="PRO" id="PR:P12928"/>
<dbReference type="Proteomes" id="UP000002494">
    <property type="component" value="Chromosome 2"/>
</dbReference>
<dbReference type="Bgee" id="ENSRNOG00000020420">
    <property type="expression patterns" value="Expressed in duodenum and 14 other cell types or tissues"/>
</dbReference>
<dbReference type="ExpressionAtlas" id="P12928">
    <property type="expression patterns" value="baseline and differential"/>
</dbReference>
<dbReference type="GO" id="GO:0005737">
    <property type="term" value="C:cytoplasm"/>
    <property type="evidence" value="ECO:0000266"/>
    <property type="project" value="RGD"/>
</dbReference>
<dbReference type="GO" id="GO:0005829">
    <property type="term" value="C:cytosol"/>
    <property type="evidence" value="ECO:0000266"/>
    <property type="project" value="RGD"/>
</dbReference>
<dbReference type="GO" id="GO:0005886">
    <property type="term" value="C:plasma membrane"/>
    <property type="evidence" value="ECO:0000266"/>
    <property type="project" value="RGD"/>
</dbReference>
<dbReference type="GO" id="GO:0005524">
    <property type="term" value="F:ATP binding"/>
    <property type="evidence" value="ECO:0007669"/>
    <property type="project" value="UniProtKB-KW"/>
</dbReference>
<dbReference type="GO" id="GO:0016301">
    <property type="term" value="F:kinase activity"/>
    <property type="evidence" value="ECO:0007669"/>
    <property type="project" value="UniProtKB-KW"/>
</dbReference>
<dbReference type="GO" id="GO:0000287">
    <property type="term" value="F:magnesium ion binding"/>
    <property type="evidence" value="ECO:0007669"/>
    <property type="project" value="InterPro"/>
</dbReference>
<dbReference type="GO" id="GO:0048029">
    <property type="term" value="F:monosaccharide binding"/>
    <property type="evidence" value="ECO:0000353"/>
    <property type="project" value="RGD"/>
</dbReference>
<dbReference type="GO" id="GO:0030955">
    <property type="term" value="F:potassium ion binding"/>
    <property type="evidence" value="ECO:0007669"/>
    <property type="project" value="InterPro"/>
</dbReference>
<dbReference type="GO" id="GO:0004743">
    <property type="term" value="F:pyruvate kinase activity"/>
    <property type="evidence" value="ECO:0000314"/>
    <property type="project" value="RGD"/>
</dbReference>
<dbReference type="GO" id="GO:0071872">
    <property type="term" value="P:cellular response to epinephrine stimulus"/>
    <property type="evidence" value="ECO:0000270"/>
    <property type="project" value="RGD"/>
</dbReference>
<dbReference type="GO" id="GO:0032869">
    <property type="term" value="P:cellular response to insulin stimulus"/>
    <property type="evidence" value="ECO:0000314"/>
    <property type="project" value="RGD"/>
</dbReference>
<dbReference type="GO" id="GO:0006096">
    <property type="term" value="P:glycolytic process"/>
    <property type="evidence" value="ECO:0000314"/>
    <property type="project" value="RGD"/>
</dbReference>
<dbReference type="GO" id="GO:0042866">
    <property type="term" value="P:pyruvate biosynthetic process"/>
    <property type="evidence" value="ECO:0000314"/>
    <property type="project" value="RGD"/>
</dbReference>
<dbReference type="GO" id="GO:0033198">
    <property type="term" value="P:response to ATP"/>
    <property type="evidence" value="ECO:0000314"/>
    <property type="project" value="RGD"/>
</dbReference>
<dbReference type="GO" id="GO:0051591">
    <property type="term" value="P:response to cAMP"/>
    <property type="evidence" value="ECO:0000314"/>
    <property type="project" value="RGD"/>
</dbReference>
<dbReference type="GO" id="GO:0009749">
    <property type="term" value="P:response to glucose"/>
    <property type="evidence" value="ECO:0000270"/>
    <property type="project" value="RGD"/>
</dbReference>
<dbReference type="GO" id="GO:0001666">
    <property type="term" value="P:response to hypoxia"/>
    <property type="evidence" value="ECO:0000270"/>
    <property type="project" value="RGD"/>
</dbReference>
<dbReference type="GO" id="GO:0010038">
    <property type="term" value="P:response to metal ion"/>
    <property type="evidence" value="ECO:0000270"/>
    <property type="project" value="RGD"/>
</dbReference>
<dbReference type="GO" id="GO:0007584">
    <property type="term" value="P:response to nutrient"/>
    <property type="evidence" value="ECO:0000270"/>
    <property type="project" value="RGD"/>
</dbReference>
<dbReference type="GO" id="GO:0051707">
    <property type="term" value="P:response to other organism"/>
    <property type="evidence" value="ECO:0000266"/>
    <property type="project" value="RGD"/>
</dbReference>
<dbReference type="CDD" id="cd00288">
    <property type="entry name" value="Pyruvate_Kinase"/>
    <property type="match status" value="1"/>
</dbReference>
<dbReference type="FunFam" id="2.40.33.10:FF:000001">
    <property type="entry name" value="Pyruvate kinase"/>
    <property type="match status" value="1"/>
</dbReference>
<dbReference type="FunFam" id="3.20.20.60:FF:000025">
    <property type="entry name" value="Pyruvate kinase"/>
    <property type="match status" value="1"/>
</dbReference>
<dbReference type="FunFam" id="3.40.1380.20:FF:000001">
    <property type="entry name" value="Pyruvate kinase"/>
    <property type="match status" value="1"/>
</dbReference>
<dbReference type="Gene3D" id="3.20.20.60">
    <property type="entry name" value="Phosphoenolpyruvate-binding domains"/>
    <property type="match status" value="1"/>
</dbReference>
<dbReference type="Gene3D" id="2.40.33.10">
    <property type="entry name" value="PK beta-barrel domain-like"/>
    <property type="match status" value="1"/>
</dbReference>
<dbReference type="Gene3D" id="3.40.1380.20">
    <property type="entry name" value="Pyruvate kinase, C-terminal domain"/>
    <property type="match status" value="1"/>
</dbReference>
<dbReference type="InterPro" id="IPR001697">
    <property type="entry name" value="Pyr_Knase"/>
</dbReference>
<dbReference type="InterPro" id="IPR015813">
    <property type="entry name" value="Pyrv/PenolPyrv_kinase-like_dom"/>
</dbReference>
<dbReference type="InterPro" id="IPR040442">
    <property type="entry name" value="Pyrv_kinase-like_dom_sf"/>
</dbReference>
<dbReference type="InterPro" id="IPR011037">
    <property type="entry name" value="Pyrv_Knase-like_insert_dom_sf"/>
</dbReference>
<dbReference type="InterPro" id="IPR018209">
    <property type="entry name" value="Pyrv_Knase_AS"/>
</dbReference>
<dbReference type="InterPro" id="IPR015793">
    <property type="entry name" value="Pyrv_Knase_brl"/>
</dbReference>
<dbReference type="InterPro" id="IPR015795">
    <property type="entry name" value="Pyrv_Knase_C"/>
</dbReference>
<dbReference type="InterPro" id="IPR036918">
    <property type="entry name" value="Pyrv_Knase_C_sf"/>
</dbReference>
<dbReference type="InterPro" id="IPR015806">
    <property type="entry name" value="Pyrv_Knase_insert_dom_sf"/>
</dbReference>
<dbReference type="NCBIfam" id="NF004491">
    <property type="entry name" value="PRK05826.1"/>
    <property type="match status" value="1"/>
</dbReference>
<dbReference type="NCBIfam" id="NF004978">
    <property type="entry name" value="PRK06354.1"/>
    <property type="match status" value="1"/>
</dbReference>
<dbReference type="NCBIfam" id="TIGR01064">
    <property type="entry name" value="pyruv_kin"/>
    <property type="match status" value="1"/>
</dbReference>
<dbReference type="PANTHER" id="PTHR11817">
    <property type="entry name" value="PYRUVATE KINASE"/>
    <property type="match status" value="1"/>
</dbReference>
<dbReference type="Pfam" id="PF00224">
    <property type="entry name" value="PK"/>
    <property type="match status" value="1"/>
</dbReference>
<dbReference type="Pfam" id="PF02887">
    <property type="entry name" value="PK_C"/>
    <property type="match status" value="1"/>
</dbReference>
<dbReference type="PRINTS" id="PR01050">
    <property type="entry name" value="PYRUVTKNASE"/>
</dbReference>
<dbReference type="SUPFAM" id="SSF51621">
    <property type="entry name" value="Phosphoenolpyruvate/pyruvate domain"/>
    <property type="match status" value="1"/>
</dbReference>
<dbReference type="SUPFAM" id="SSF50800">
    <property type="entry name" value="PK beta-barrel domain-like"/>
    <property type="match status" value="1"/>
</dbReference>
<dbReference type="SUPFAM" id="SSF52935">
    <property type="entry name" value="PK C-terminal domain-like"/>
    <property type="match status" value="1"/>
</dbReference>
<dbReference type="PROSITE" id="PS00110">
    <property type="entry name" value="PYRUVATE_KINASE"/>
    <property type="match status" value="1"/>
</dbReference>
<name>KPYR_RAT</name>
<proteinExistence type="evidence at protein level"/>
<organism>
    <name type="scientific">Rattus norvegicus</name>
    <name type="common">Rat</name>
    <dbReference type="NCBI Taxonomy" id="10116"/>
    <lineage>
        <taxon>Eukaryota</taxon>
        <taxon>Metazoa</taxon>
        <taxon>Chordata</taxon>
        <taxon>Craniata</taxon>
        <taxon>Vertebrata</taxon>
        <taxon>Euteleostomi</taxon>
        <taxon>Mammalia</taxon>
        <taxon>Eutheria</taxon>
        <taxon>Euarchontoglires</taxon>
        <taxon>Glires</taxon>
        <taxon>Rodentia</taxon>
        <taxon>Myomorpha</taxon>
        <taxon>Muroidea</taxon>
        <taxon>Muridae</taxon>
        <taxon>Murinae</taxon>
        <taxon>Rattus</taxon>
    </lineage>
</organism>
<keyword id="KW-0002">3D-structure</keyword>
<keyword id="KW-0021">Allosteric enzyme</keyword>
<keyword id="KW-0025">Alternative splicing</keyword>
<keyword id="KW-0067">ATP-binding</keyword>
<keyword id="KW-0324">Glycolysis</keyword>
<keyword id="KW-0418">Kinase</keyword>
<keyword id="KW-0460">Magnesium</keyword>
<keyword id="KW-0464">Manganese</keyword>
<keyword id="KW-0479">Metal-binding</keyword>
<keyword id="KW-0547">Nucleotide-binding</keyword>
<keyword id="KW-0597">Phosphoprotein</keyword>
<keyword id="KW-0630">Potassium</keyword>
<keyword id="KW-0670">Pyruvate</keyword>
<keyword id="KW-1185">Reference proteome</keyword>
<keyword id="KW-0808">Transferase</keyword>
<sequence>MSVQENTLPQQLWPWIFRSQKDLAKSALSGAPGGPAGYLRRASVAQLTQELGTAFFQQQQLPAAMADTFLEHLCLLDIDSQPVAARSTSIIATIGPASRSVDRLKEMIKAGMNIARLNFSHGSHEYHAESIANIREATESFATSPLSYRPVAIALDTKGPEIRTGVLQGGPESEVEIVKGSQVLVTVDPKFQTRGDAKTVWVDYHNITRVVAVGGRIYIDDGLISLVVQKIGPEGLVTEVEHGGILGSRKGVNLPNTEVDLPGLSEQDLLDLRFGVQHNVDIIFASFVRKASDVLAVRDALGPEGQNIKIISKIENHEGVKKFDEILEVSDGIMVARGDLGIEIPAEKVFLAQKMMIGRCNLAGKPVVCATQMLESMITKARPTRAETSDVANAVLDGADCIMLSGETAKGSFPVEAVMMQHAIAREAEAAVYHRQLFEELRRAAPLSRDPTEVTAIGAVEASFKCCAAAIIVLTKTGRSAQLLSQYRPRAAVIAVTRSAQAARQVHLSRGVFPLLYREPPEAIWADDVDRRVQFGIESGKLRGFLRVGDLVIVVTGWRPGSGYTNIMRVLSVS</sequence>
<feature type="chain" id="PRO_0000112096" description="Pyruvate kinase PKLR">
    <location>
        <begin position="1"/>
        <end position="574"/>
    </location>
</feature>
<feature type="binding site" evidence="3">
    <location>
        <position position="116"/>
    </location>
    <ligand>
        <name>substrate</name>
    </ligand>
</feature>
<feature type="binding site" evidence="2">
    <location>
        <begin position="118"/>
        <end position="121"/>
    </location>
    <ligand>
        <name>ATP</name>
        <dbReference type="ChEBI" id="CHEBI:30616"/>
    </ligand>
</feature>
<feature type="binding site" evidence="3">
    <location>
        <position position="118"/>
    </location>
    <ligand>
        <name>K(+)</name>
        <dbReference type="ChEBI" id="CHEBI:29103"/>
    </ligand>
</feature>
<feature type="binding site" evidence="3">
    <location>
        <position position="120"/>
    </location>
    <ligand>
        <name>K(+)</name>
        <dbReference type="ChEBI" id="CHEBI:29103"/>
    </ligand>
</feature>
<feature type="binding site" evidence="3">
    <location>
        <position position="156"/>
    </location>
    <ligand>
        <name>K(+)</name>
        <dbReference type="ChEBI" id="CHEBI:29103"/>
    </ligand>
</feature>
<feature type="binding site" evidence="3">
    <location>
        <position position="157"/>
    </location>
    <ligand>
        <name>K(+)</name>
        <dbReference type="ChEBI" id="CHEBI:29103"/>
    </ligand>
</feature>
<feature type="binding site" evidence="2">
    <location>
        <position position="163"/>
    </location>
    <ligand>
        <name>ATP</name>
        <dbReference type="ChEBI" id="CHEBI:30616"/>
    </ligand>
</feature>
<feature type="binding site" evidence="2">
    <location>
        <position position="250"/>
    </location>
    <ligand>
        <name>ATP</name>
        <dbReference type="ChEBI" id="CHEBI:30616"/>
    </ligand>
</feature>
<feature type="binding site" evidence="3">
    <location>
        <position position="313"/>
    </location>
    <ligand>
        <name>substrate</name>
    </ligand>
</feature>
<feature type="binding site" evidence="3">
    <location>
        <position position="315"/>
    </location>
    <ligand>
        <name>Mn(2+)</name>
        <dbReference type="ChEBI" id="CHEBI:29035"/>
    </ligand>
</feature>
<feature type="binding site" evidence="3">
    <location>
        <position position="338"/>
    </location>
    <ligand>
        <name>substrate</name>
    </ligand>
</feature>
<feature type="binding site" evidence="3">
    <location>
        <position position="339"/>
    </location>
    <ligand>
        <name>Mn(2+)</name>
        <dbReference type="ChEBI" id="CHEBI:29035"/>
    </ligand>
</feature>
<feature type="binding site" evidence="3">
    <location>
        <position position="339"/>
    </location>
    <ligand>
        <name>substrate</name>
    </ligand>
</feature>
<feature type="binding site" evidence="3">
    <location>
        <position position="371"/>
    </location>
    <ligand>
        <name>substrate</name>
    </ligand>
</feature>
<feature type="binding site" evidence="3">
    <location>
        <begin position="475"/>
        <end position="480"/>
    </location>
    <ligand>
        <name>beta-D-fructose 1,6-bisphosphate</name>
        <dbReference type="ChEBI" id="CHEBI:32966"/>
        <note>allosteric activator</note>
    </ligand>
</feature>
<feature type="binding site" evidence="3">
    <location>
        <position position="525"/>
    </location>
    <ligand>
        <name>beta-D-fructose 1,6-bisphosphate</name>
        <dbReference type="ChEBI" id="CHEBI:32966"/>
        <note>allosteric activator</note>
    </ligand>
</feature>
<feature type="binding site" evidence="3">
    <location>
        <position position="532"/>
    </location>
    <ligand>
        <name>beta-D-fructose 1,6-bisphosphate</name>
        <dbReference type="ChEBI" id="CHEBI:32966"/>
        <note>allosteric activator</note>
    </ligand>
</feature>
<feature type="binding site" evidence="3">
    <location>
        <begin position="559"/>
        <end position="564"/>
    </location>
    <ligand>
        <name>beta-D-fructose 1,6-bisphosphate</name>
        <dbReference type="ChEBI" id="CHEBI:32966"/>
        <note>allosteric activator</note>
    </ligand>
</feature>
<feature type="site" description="Transition state stabilizer" evidence="1">
    <location>
        <position position="313"/>
    </location>
</feature>
<feature type="modified residue" description="Phosphoserine" evidence="3">
    <location>
        <position position="2"/>
    </location>
</feature>
<feature type="modified residue" description="Phosphoserine" evidence="3">
    <location>
        <position position="19"/>
    </location>
</feature>
<feature type="modified residue" description="Phosphoserine" evidence="3">
    <location>
        <position position="26"/>
    </location>
</feature>
<feature type="modified residue" description="Phosphoserine" evidence="3">
    <location>
        <position position="43"/>
    </location>
</feature>
<feature type="modified residue" description="Phosphoserine" evidence="3">
    <location>
        <position position="292"/>
    </location>
</feature>
<feature type="splice variant" id="VSP_002884" description="In isoform L-type." evidence="4">
    <original>MSVQENTLPQQLWPWIFRSQKDLAKSALSGAPG</original>
    <variation>ME</variation>
    <location>
        <begin position="1"/>
        <end position="33"/>
    </location>
</feature>
<feature type="sequence conflict" description="In Ref. 1; AAA41882/AAA41883." evidence="4" ref="1">
    <original>S</original>
    <variation>Y</variation>
    <location>
        <position position="130"/>
    </location>
</feature>
<feature type="sequence conflict" description="In Ref. 1; AAA41882/AAA41883." evidence="4" ref="1">
    <original>K</original>
    <variation>R</variation>
    <location>
        <position position="322"/>
    </location>
</feature>
<feature type="sequence conflict" description="In Ref. 3; AAA41880." evidence="4" ref="3">
    <original>R</original>
    <variation>G</variation>
    <location>
        <position position="498"/>
    </location>
</feature>
<feature type="sequence conflict" description="In Ref. 3; AAA41880." evidence="4" ref="3">
    <original>Q</original>
    <variation>K</variation>
    <location>
        <position position="501"/>
    </location>
</feature>
<feature type="helix" evidence="6">
    <location>
        <begin position="47"/>
        <end position="50"/>
    </location>
</feature>
<feature type="helix" evidence="5">
    <location>
        <begin position="54"/>
        <end position="57"/>
    </location>
</feature>
<feature type="helix" evidence="5">
    <location>
        <begin position="61"/>
        <end position="64"/>
    </location>
</feature>
<feature type="helix" evidence="5">
    <location>
        <begin position="69"/>
        <end position="75"/>
    </location>
</feature>
<feature type="strand" evidence="5">
    <location>
        <begin position="88"/>
        <end position="93"/>
    </location>
</feature>
<feature type="helix" evidence="5">
    <location>
        <begin position="96"/>
        <end position="98"/>
    </location>
</feature>
<feature type="helix" evidence="5">
    <location>
        <begin position="101"/>
        <end position="110"/>
    </location>
</feature>
<feature type="strand" evidence="5">
    <location>
        <begin position="112"/>
        <end position="118"/>
    </location>
</feature>
<feature type="helix" evidence="5">
    <location>
        <begin position="124"/>
        <end position="139"/>
    </location>
</feature>
<feature type="turn" evidence="5">
    <location>
        <begin position="140"/>
        <end position="143"/>
    </location>
</feature>
<feature type="turn" evidence="6">
    <location>
        <begin position="145"/>
        <end position="147"/>
    </location>
</feature>
<feature type="strand" evidence="5">
    <location>
        <begin position="152"/>
        <end position="156"/>
    </location>
</feature>
<feature type="strand" evidence="5">
    <location>
        <begin position="162"/>
        <end position="164"/>
    </location>
</feature>
<feature type="strand" evidence="5">
    <location>
        <begin position="175"/>
        <end position="177"/>
    </location>
</feature>
<feature type="strand" evidence="5">
    <location>
        <begin position="182"/>
        <end position="186"/>
    </location>
</feature>
<feature type="helix" evidence="5">
    <location>
        <begin position="189"/>
        <end position="191"/>
    </location>
</feature>
<feature type="strand" evidence="5">
    <location>
        <begin position="197"/>
        <end position="203"/>
    </location>
</feature>
<feature type="helix" evidence="5">
    <location>
        <begin position="207"/>
        <end position="210"/>
    </location>
</feature>
<feature type="strand" evidence="5">
    <location>
        <begin position="216"/>
        <end position="219"/>
    </location>
</feature>
<feature type="turn" evidence="5">
    <location>
        <begin position="220"/>
        <end position="223"/>
    </location>
</feature>
<feature type="strand" evidence="5">
    <location>
        <begin position="224"/>
        <end position="232"/>
    </location>
</feature>
<feature type="strand" evidence="5">
    <location>
        <begin position="235"/>
        <end position="242"/>
    </location>
</feature>
<feature type="strand" evidence="5">
    <location>
        <begin position="244"/>
        <end position="246"/>
    </location>
</feature>
<feature type="strand" evidence="5">
    <location>
        <begin position="251"/>
        <end position="253"/>
    </location>
</feature>
<feature type="helix" evidence="5">
    <location>
        <begin position="266"/>
        <end position="277"/>
    </location>
</feature>
<feature type="strand" evidence="5">
    <location>
        <begin position="281"/>
        <end position="285"/>
    </location>
</feature>
<feature type="helix" evidence="5">
    <location>
        <begin position="291"/>
        <end position="301"/>
    </location>
</feature>
<feature type="helix" evidence="5">
    <location>
        <begin position="303"/>
        <end position="305"/>
    </location>
</feature>
<feature type="strand" evidence="5">
    <location>
        <begin position="308"/>
        <end position="314"/>
    </location>
</feature>
<feature type="helix" evidence="5">
    <location>
        <begin position="317"/>
        <end position="321"/>
    </location>
</feature>
<feature type="helix" evidence="5">
    <location>
        <begin position="323"/>
        <end position="329"/>
    </location>
</feature>
<feature type="strand" evidence="5">
    <location>
        <begin position="330"/>
        <end position="336"/>
    </location>
</feature>
<feature type="helix" evidence="5">
    <location>
        <begin position="337"/>
        <end position="343"/>
    </location>
</feature>
<feature type="helix" evidence="5">
    <location>
        <begin position="346"/>
        <end position="348"/>
    </location>
</feature>
<feature type="helix" evidence="5">
    <location>
        <begin position="349"/>
        <end position="363"/>
    </location>
</feature>
<feature type="strand" evidence="5">
    <location>
        <begin position="367"/>
        <end position="372"/>
    </location>
</feature>
<feature type="helix" evidence="5">
    <location>
        <begin position="375"/>
        <end position="378"/>
    </location>
</feature>
<feature type="helix" evidence="5">
    <location>
        <begin position="385"/>
        <end position="397"/>
    </location>
</feature>
<feature type="strand" evidence="5">
    <location>
        <begin position="400"/>
        <end position="405"/>
    </location>
</feature>
<feature type="helix" evidence="5">
    <location>
        <begin position="406"/>
        <end position="409"/>
    </location>
</feature>
<feature type="helix" evidence="5">
    <location>
        <begin position="414"/>
        <end position="431"/>
    </location>
</feature>
<feature type="helix" evidence="5">
    <location>
        <begin position="434"/>
        <end position="444"/>
    </location>
</feature>
<feature type="helix" evidence="5">
    <location>
        <begin position="451"/>
        <end position="465"/>
    </location>
</feature>
<feature type="strand" evidence="5">
    <location>
        <begin position="469"/>
        <end position="474"/>
    </location>
</feature>
<feature type="strand" evidence="5">
    <location>
        <begin position="476"/>
        <end position="478"/>
    </location>
</feature>
<feature type="helix" evidence="5">
    <location>
        <begin position="479"/>
        <end position="485"/>
    </location>
</feature>
<feature type="strand" evidence="5">
    <location>
        <begin position="490"/>
        <end position="498"/>
    </location>
</feature>
<feature type="helix" evidence="5">
    <location>
        <begin position="500"/>
        <end position="505"/>
    </location>
</feature>
<feature type="helix" evidence="5">
    <location>
        <begin position="506"/>
        <end position="508"/>
    </location>
</feature>
<feature type="strand" evidence="5">
    <location>
        <begin position="512"/>
        <end position="516"/>
    </location>
</feature>
<feature type="helix" evidence="5">
    <location>
        <begin position="525"/>
        <end position="542"/>
    </location>
</feature>
<feature type="strand" evidence="5">
    <location>
        <begin position="551"/>
        <end position="561"/>
    </location>
</feature>
<feature type="strand" evidence="5">
    <location>
        <begin position="565"/>
        <end position="572"/>
    </location>
</feature>
<protein>
    <recommendedName>
        <fullName>Pyruvate kinase PKLR</fullName>
        <ecNumber evidence="3">2.7.1.40</ecNumber>
    </recommendedName>
    <alternativeName>
        <fullName>L-PK</fullName>
    </alternativeName>
    <alternativeName>
        <fullName>Pyruvate kinase isozymes L/R</fullName>
    </alternativeName>
</protein>